<gene>
    <name evidence="1" type="primary">hisE</name>
    <name type="ordered locus">Bcenmc03_0412</name>
</gene>
<comment type="catalytic activity">
    <reaction evidence="1">
        <text>1-(5-phospho-beta-D-ribosyl)-ATP + H2O = 1-(5-phospho-beta-D-ribosyl)-5'-AMP + diphosphate + H(+)</text>
        <dbReference type="Rhea" id="RHEA:22828"/>
        <dbReference type="ChEBI" id="CHEBI:15377"/>
        <dbReference type="ChEBI" id="CHEBI:15378"/>
        <dbReference type="ChEBI" id="CHEBI:33019"/>
        <dbReference type="ChEBI" id="CHEBI:59457"/>
        <dbReference type="ChEBI" id="CHEBI:73183"/>
        <dbReference type="EC" id="3.6.1.31"/>
    </reaction>
</comment>
<comment type="pathway">
    <text evidence="1">Amino-acid biosynthesis; L-histidine biosynthesis; L-histidine from 5-phospho-alpha-D-ribose 1-diphosphate: step 2/9.</text>
</comment>
<comment type="subcellular location">
    <subcellularLocation>
        <location evidence="1">Cytoplasm</location>
    </subcellularLocation>
</comment>
<comment type="similarity">
    <text evidence="1">Belongs to the PRA-PH family.</text>
</comment>
<evidence type="ECO:0000255" key="1">
    <source>
        <dbReference type="HAMAP-Rule" id="MF_01020"/>
    </source>
</evidence>
<organism>
    <name type="scientific">Burkholderia orbicola (strain MC0-3)</name>
    <dbReference type="NCBI Taxonomy" id="406425"/>
    <lineage>
        <taxon>Bacteria</taxon>
        <taxon>Pseudomonadati</taxon>
        <taxon>Pseudomonadota</taxon>
        <taxon>Betaproteobacteria</taxon>
        <taxon>Burkholderiales</taxon>
        <taxon>Burkholderiaceae</taxon>
        <taxon>Burkholderia</taxon>
        <taxon>Burkholderia cepacia complex</taxon>
        <taxon>Burkholderia orbicola</taxon>
    </lineage>
</organism>
<proteinExistence type="inferred from homology"/>
<keyword id="KW-0028">Amino-acid biosynthesis</keyword>
<keyword id="KW-0067">ATP-binding</keyword>
<keyword id="KW-0963">Cytoplasm</keyword>
<keyword id="KW-0368">Histidine biosynthesis</keyword>
<keyword id="KW-0378">Hydrolase</keyword>
<keyword id="KW-0547">Nucleotide-binding</keyword>
<reference key="1">
    <citation type="submission" date="2008-02" db="EMBL/GenBank/DDBJ databases">
        <title>Complete sequence of chromosome 1 of Burkholderia cenocepacia MC0-3.</title>
        <authorList>
            <person name="Copeland A."/>
            <person name="Lucas S."/>
            <person name="Lapidus A."/>
            <person name="Barry K."/>
            <person name="Bruce D."/>
            <person name="Goodwin L."/>
            <person name="Glavina del Rio T."/>
            <person name="Dalin E."/>
            <person name="Tice H."/>
            <person name="Pitluck S."/>
            <person name="Chain P."/>
            <person name="Malfatti S."/>
            <person name="Shin M."/>
            <person name="Vergez L."/>
            <person name="Schmutz J."/>
            <person name="Larimer F."/>
            <person name="Land M."/>
            <person name="Hauser L."/>
            <person name="Kyrpides N."/>
            <person name="Mikhailova N."/>
            <person name="Tiedje J."/>
            <person name="Richardson P."/>
        </authorList>
    </citation>
    <scope>NUCLEOTIDE SEQUENCE [LARGE SCALE GENOMIC DNA]</scope>
    <source>
        <strain>MC0-3</strain>
    </source>
</reference>
<feature type="chain" id="PRO_1000135305" description="Phosphoribosyl-ATP pyrophosphatase">
    <location>
        <begin position="1"/>
        <end position="121"/>
    </location>
</feature>
<accession>B1JUA7</accession>
<protein>
    <recommendedName>
        <fullName evidence="1">Phosphoribosyl-ATP pyrophosphatase</fullName>
        <shortName evidence="1">PRA-PH</shortName>
        <ecNumber evidence="1">3.6.1.31</ecNumber>
    </recommendedName>
</protein>
<name>HIS2_BURO0</name>
<sequence>MTQSTEDTLLRLAAVIDSRKGGDPDQSYVSRLFHKGDDAVLKKIGEEATEVVLAAKDVRQGGAPTALVGEVADLWFHCLVMLSHFDLSPADVIAELERREGLSGIEEKALRKRREREENGG</sequence>
<dbReference type="EC" id="3.6.1.31" evidence="1"/>
<dbReference type="EMBL" id="CP000958">
    <property type="protein sequence ID" value="ACA89592.1"/>
    <property type="molecule type" value="Genomic_DNA"/>
</dbReference>
<dbReference type="RefSeq" id="WP_006485344.1">
    <property type="nucleotide sequence ID" value="NC_010508.1"/>
</dbReference>
<dbReference type="SMR" id="B1JUA7"/>
<dbReference type="KEGG" id="bcm:Bcenmc03_0412"/>
<dbReference type="HOGENOM" id="CLU_123337_1_2_4"/>
<dbReference type="UniPathway" id="UPA00031">
    <property type="reaction ID" value="UER00007"/>
</dbReference>
<dbReference type="Proteomes" id="UP000002169">
    <property type="component" value="Chromosome 1"/>
</dbReference>
<dbReference type="GO" id="GO:0005737">
    <property type="term" value="C:cytoplasm"/>
    <property type="evidence" value="ECO:0007669"/>
    <property type="project" value="UniProtKB-SubCell"/>
</dbReference>
<dbReference type="GO" id="GO:0005524">
    <property type="term" value="F:ATP binding"/>
    <property type="evidence" value="ECO:0007669"/>
    <property type="project" value="UniProtKB-KW"/>
</dbReference>
<dbReference type="GO" id="GO:0004636">
    <property type="term" value="F:phosphoribosyl-ATP diphosphatase activity"/>
    <property type="evidence" value="ECO:0007669"/>
    <property type="project" value="UniProtKB-UniRule"/>
</dbReference>
<dbReference type="GO" id="GO:0000105">
    <property type="term" value="P:L-histidine biosynthetic process"/>
    <property type="evidence" value="ECO:0007669"/>
    <property type="project" value="UniProtKB-UniRule"/>
</dbReference>
<dbReference type="CDD" id="cd11534">
    <property type="entry name" value="NTP-PPase_HisIE_like"/>
    <property type="match status" value="1"/>
</dbReference>
<dbReference type="Gene3D" id="1.10.287.1080">
    <property type="entry name" value="MazG-like"/>
    <property type="match status" value="1"/>
</dbReference>
<dbReference type="HAMAP" id="MF_01020">
    <property type="entry name" value="HisE"/>
    <property type="match status" value="1"/>
</dbReference>
<dbReference type="InterPro" id="IPR008179">
    <property type="entry name" value="HisE"/>
</dbReference>
<dbReference type="InterPro" id="IPR021130">
    <property type="entry name" value="PRib-ATP_PPHydrolase-like"/>
</dbReference>
<dbReference type="NCBIfam" id="TIGR03188">
    <property type="entry name" value="histidine_hisI"/>
    <property type="match status" value="1"/>
</dbReference>
<dbReference type="NCBIfam" id="NF001611">
    <property type="entry name" value="PRK00400.1-3"/>
    <property type="match status" value="1"/>
</dbReference>
<dbReference type="PANTHER" id="PTHR42945">
    <property type="entry name" value="HISTIDINE BIOSYNTHESIS BIFUNCTIONAL PROTEIN"/>
    <property type="match status" value="1"/>
</dbReference>
<dbReference type="PANTHER" id="PTHR42945:SF9">
    <property type="entry name" value="HISTIDINE BIOSYNTHESIS BIFUNCTIONAL PROTEIN HISIE"/>
    <property type="match status" value="1"/>
</dbReference>
<dbReference type="Pfam" id="PF01503">
    <property type="entry name" value="PRA-PH"/>
    <property type="match status" value="1"/>
</dbReference>
<dbReference type="SUPFAM" id="SSF101386">
    <property type="entry name" value="all-alpha NTP pyrophosphatases"/>
    <property type="match status" value="1"/>
</dbReference>